<reference key="1">
    <citation type="journal article" date="1986" name="J. Bacteriol.">
        <title>Nucleotide sequences of two cellulase genes from alkalophilic Bacillus sp. strain N-4 and their strong homology.</title>
        <authorList>
            <person name="Fukumori F."/>
            <person name="Sashihara N."/>
            <person name="Kudo T."/>
            <person name="Horikoshi K."/>
        </authorList>
    </citation>
    <scope>NUCLEOTIDE SEQUENCE [GENOMIC DNA]</scope>
</reference>
<name>GUN1_EVAC2</name>
<evidence type="ECO:0000250" key="1">
    <source>
        <dbReference type="UniProtKB" id="O85465"/>
    </source>
</evidence>
<evidence type="ECO:0000256" key="2">
    <source>
        <dbReference type="SAM" id="MobiDB-lite"/>
    </source>
</evidence>
<evidence type="ECO:0000305" key="3"/>
<sequence length="488" mass="54264">MKKLTTIFIVFTLALLFVGNSTSANNGSVVEQNGQLSIQNGQLVNEHGDPVQLKGMSSHGLQWYGQFVNYDSIKWLRDDWGITVFRAAMYTSSGGYIEDPSVKEKVKEAVEAAIDLGIYVIIDWHILSDNDPNIYKEEAKEFFDEMSALYGDYPNVIYEIANEPNGHNVRWDSHIKPYAEEVIPVIRANDPNNIVIVGTATWSQDVHEAADNQLDDPNVMYAFHFYAGTHGQQLRNQVDYALSRGAAIFVSEWGTSAATGDGGVFLDEAQVWIDFMDERNLSWANWSLTHKDESSAALMPGANPTGGWTAAELSPSGAFVREKIRESASIPPSDPTPPSDPDPGEPDPTPPSDPGEYPAWDPNQIYTNEIVYHNGQLWQAKWWTQNQEPGANQYGPWEPLGDAPPSEPSDPPPPSEPEPDPGEPDPGEPDPGEPDPTPPSDPGEYPAWDPTQIYTNEIVYHNGQLWQAKWWTQNQEPGYPYGPWEPLN</sequence>
<organism>
    <name type="scientific">Evansella cellulosilytica (strain ATCC 21833 / DSM 2522 / FERM P-1141 / JCM 9156 / N-4)</name>
    <name type="common">Bacillus cellulosilyticus</name>
    <dbReference type="NCBI Taxonomy" id="649639"/>
    <lineage>
        <taxon>Bacteria</taxon>
        <taxon>Bacillati</taxon>
        <taxon>Bacillota</taxon>
        <taxon>Bacilli</taxon>
        <taxon>Bacillales</taxon>
        <taxon>Bacillaceae</taxon>
        <taxon>Evansella</taxon>
    </lineage>
</organism>
<dbReference type="EC" id="3.2.1.4"/>
<dbReference type="EMBL" id="M14781">
    <property type="protein sequence ID" value="AAA22301.1"/>
    <property type="molecule type" value="Genomic_DNA"/>
</dbReference>
<dbReference type="PIR" id="A25156">
    <property type="entry name" value="A25156"/>
</dbReference>
<dbReference type="RefSeq" id="WP_013487061.1">
    <property type="nucleotide sequence ID" value="NC_014829.1"/>
</dbReference>
<dbReference type="SMR" id="P06566"/>
<dbReference type="STRING" id="649639.Bcell_0438"/>
<dbReference type="CAZy" id="CBM5">
    <property type="family name" value="Carbohydrate-Binding Module Family 5"/>
</dbReference>
<dbReference type="CAZy" id="GH5">
    <property type="family name" value="Glycoside Hydrolase Family 5"/>
</dbReference>
<dbReference type="eggNOG" id="COG2730">
    <property type="taxonomic scope" value="Bacteria"/>
</dbReference>
<dbReference type="OrthoDB" id="154460at2"/>
<dbReference type="SABIO-RK" id="P06566"/>
<dbReference type="GO" id="GO:0005576">
    <property type="term" value="C:extracellular region"/>
    <property type="evidence" value="ECO:0007669"/>
    <property type="project" value="InterPro"/>
</dbReference>
<dbReference type="GO" id="GO:0030246">
    <property type="term" value="F:carbohydrate binding"/>
    <property type="evidence" value="ECO:0007669"/>
    <property type="project" value="InterPro"/>
</dbReference>
<dbReference type="GO" id="GO:0008810">
    <property type="term" value="F:cellulase activity"/>
    <property type="evidence" value="ECO:0007669"/>
    <property type="project" value="UniProtKB-EC"/>
</dbReference>
<dbReference type="GO" id="GO:0030245">
    <property type="term" value="P:cellulose catabolic process"/>
    <property type="evidence" value="ECO:0007669"/>
    <property type="project" value="UniProtKB-KW"/>
</dbReference>
<dbReference type="CDD" id="cd12215">
    <property type="entry name" value="ChiC_BD"/>
    <property type="match status" value="2"/>
</dbReference>
<dbReference type="Gene3D" id="2.10.10.20">
    <property type="entry name" value="Carbohydrate-binding module superfamily 5/12"/>
    <property type="match status" value="2"/>
</dbReference>
<dbReference type="Gene3D" id="3.20.20.80">
    <property type="entry name" value="Glycosidases"/>
    <property type="match status" value="1"/>
</dbReference>
<dbReference type="InterPro" id="IPR003610">
    <property type="entry name" value="CBM5/12"/>
</dbReference>
<dbReference type="InterPro" id="IPR036573">
    <property type="entry name" value="CBM_sf_5/12"/>
</dbReference>
<dbReference type="InterPro" id="IPR001547">
    <property type="entry name" value="Glyco_hydro_5"/>
</dbReference>
<dbReference type="InterPro" id="IPR018087">
    <property type="entry name" value="Glyco_hydro_5_CS"/>
</dbReference>
<dbReference type="InterPro" id="IPR017853">
    <property type="entry name" value="Glycoside_hydrolase_SF"/>
</dbReference>
<dbReference type="PANTHER" id="PTHR34142">
    <property type="entry name" value="ENDO-BETA-1,4-GLUCANASE A"/>
    <property type="match status" value="1"/>
</dbReference>
<dbReference type="PANTHER" id="PTHR34142:SF1">
    <property type="entry name" value="GLYCOSIDE HYDROLASE FAMILY 5 DOMAIN-CONTAINING PROTEIN"/>
    <property type="match status" value="1"/>
</dbReference>
<dbReference type="Pfam" id="PF00150">
    <property type="entry name" value="Cellulase"/>
    <property type="match status" value="1"/>
</dbReference>
<dbReference type="SMART" id="SM00495">
    <property type="entry name" value="ChtBD3"/>
    <property type="match status" value="2"/>
</dbReference>
<dbReference type="SUPFAM" id="SSF51445">
    <property type="entry name" value="(Trans)glycosidases"/>
    <property type="match status" value="1"/>
</dbReference>
<dbReference type="SUPFAM" id="SSF51055">
    <property type="entry name" value="Carbohydrate binding domain"/>
    <property type="match status" value="2"/>
</dbReference>
<dbReference type="PROSITE" id="PS00659">
    <property type="entry name" value="GLYCOSYL_HYDROL_F5"/>
    <property type="match status" value="1"/>
</dbReference>
<proteinExistence type="inferred from homology"/>
<gene>
    <name type="primary">celA</name>
</gene>
<keyword id="KW-0119">Carbohydrate metabolism</keyword>
<keyword id="KW-0136">Cellulose degradation</keyword>
<keyword id="KW-0326">Glycosidase</keyword>
<keyword id="KW-0378">Hydrolase</keyword>
<keyword id="KW-0624">Polysaccharide degradation</keyword>
<feature type="chain" id="PRO_0000184044" description="Endoglucanase A">
    <location>
        <begin position="1"/>
        <end position="488"/>
    </location>
</feature>
<feature type="region of interest" description="Disordered" evidence="2">
    <location>
        <begin position="326"/>
        <end position="362"/>
    </location>
</feature>
<feature type="region of interest" description="Disordered" evidence="2">
    <location>
        <begin position="388"/>
        <end position="451"/>
    </location>
</feature>
<feature type="compositionally biased region" description="Pro residues" evidence="2">
    <location>
        <begin position="332"/>
        <end position="353"/>
    </location>
</feature>
<feature type="compositionally biased region" description="Pro residues" evidence="2">
    <location>
        <begin position="405"/>
        <end position="416"/>
    </location>
</feature>
<feature type="compositionally biased region" description="Acidic residues" evidence="2">
    <location>
        <begin position="417"/>
        <end position="433"/>
    </location>
</feature>
<feature type="active site" description="Proton donor" evidence="1">
    <location>
        <position position="163"/>
    </location>
</feature>
<feature type="active site" description="Nucleophile" evidence="1">
    <location>
        <position position="252"/>
    </location>
</feature>
<feature type="binding site" evidence="1">
    <location>
        <position position="59"/>
    </location>
    <ligand>
        <name>substrate</name>
    </ligand>
</feature>
<feature type="binding site" evidence="1">
    <location>
        <begin position="63"/>
        <end position="64"/>
    </location>
    <ligand>
        <name>substrate</name>
    </ligand>
</feature>
<feature type="binding site" evidence="1">
    <location>
        <position position="90"/>
    </location>
    <ligand>
        <name>substrate</name>
    </ligand>
</feature>
<feature type="binding site" evidence="1">
    <location>
        <position position="125"/>
    </location>
    <ligand>
        <name>substrate</name>
    </ligand>
</feature>
<feature type="binding site" evidence="1">
    <location>
        <position position="226"/>
    </location>
    <ligand>
        <name>substrate</name>
    </ligand>
</feature>
<feature type="binding site" evidence="1">
    <location>
        <begin position="258"/>
        <end position="259"/>
    </location>
    <ligand>
        <name>substrate</name>
    </ligand>
</feature>
<feature type="binding site" evidence="1">
    <location>
        <position position="286"/>
    </location>
    <ligand>
        <name>substrate</name>
    </ligand>
</feature>
<feature type="binding site" evidence="1">
    <location>
        <begin position="291"/>
        <end position="293"/>
    </location>
    <ligand>
        <name>substrate</name>
    </ligand>
</feature>
<comment type="catalytic activity">
    <reaction>
        <text>Endohydrolysis of (1-&gt;4)-beta-D-glucosidic linkages in cellulose, lichenin and cereal beta-D-glucans.</text>
        <dbReference type="EC" id="3.2.1.4"/>
    </reaction>
</comment>
<comment type="similarity">
    <text evidence="3">Belongs to the glycosyl hydrolase 5 (cellulase A) family.</text>
</comment>
<protein>
    <recommendedName>
        <fullName>Endoglucanase A</fullName>
        <ecNumber>3.2.1.4</ecNumber>
    </recommendedName>
    <alternativeName>
        <fullName>Cellulase A</fullName>
    </alternativeName>
    <alternativeName>
        <fullName>Endo-1,4-beta-glucanase A</fullName>
    </alternativeName>
</protein>
<accession>P06566</accession>